<comment type="function">
    <text evidence="1">Functions in the biosynthesis of branched-chain amino acids. Catalyzes the dehydration of (2R,3R)-2,3-dihydroxy-3-methylpentanoate (2,3-dihydroxy-3-methylvalerate) into 2-oxo-3-methylpentanoate (2-oxo-3-methylvalerate) and of (2R)-2,3-dihydroxy-3-methylbutanoate (2,3-dihydroxyisovalerate) into 2-oxo-3-methylbutanoate (2-oxoisovalerate), the penultimate precursor to L-isoleucine and L-valine, respectively.</text>
</comment>
<comment type="catalytic activity">
    <reaction evidence="1">
        <text>(2R)-2,3-dihydroxy-3-methylbutanoate = 3-methyl-2-oxobutanoate + H2O</text>
        <dbReference type="Rhea" id="RHEA:24809"/>
        <dbReference type="ChEBI" id="CHEBI:11851"/>
        <dbReference type="ChEBI" id="CHEBI:15377"/>
        <dbReference type="ChEBI" id="CHEBI:49072"/>
        <dbReference type="EC" id="4.2.1.9"/>
    </reaction>
    <physiologicalReaction direction="left-to-right" evidence="1">
        <dbReference type="Rhea" id="RHEA:24810"/>
    </physiologicalReaction>
</comment>
<comment type="catalytic activity">
    <reaction evidence="1">
        <text>(2R,3R)-2,3-dihydroxy-3-methylpentanoate = (S)-3-methyl-2-oxopentanoate + H2O</text>
        <dbReference type="Rhea" id="RHEA:27694"/>
        <dbReference type="ChEBI" id="CHEBI:15377"/>
        <dbReference type="ChEBI" id="CHEBI:35146"/>
        <dbReference type="ChEBI" id="CHEBI:49258"/>
        <dbReference type="EC" id="4.2.1.9"/>
    </reaction>
    <physiologicalReaction direction="left-to-right" evidence="1">
        <dbReference type="Rhea" id="RHEA:27695"/>
    </physiologicalReaction>
</comment>
<comment type="cofactor">
    <cofactor evidence="1">
        <name>[2Fe-2S] cluster</name>
        <dbReference type="ChEBI" id="CHEBI:190135"/>
    </cofactor>
    <text evidence="1">Binds 1 [2Fe-2S] cluster per subunit. This cluster acts as a Lewis acid cofactor.</text>
</comment>
<comment type="cofactor">
    <cofactor evidence="1">
        <name>Mg(2+)</name>
        <dbReference type="ChEBI" id="CHEBI:18420"/>
    </cofactor>
</comment>
<comment type="pathway">
    <text evidence="1">Amino-acid biosynthesis; L-isoleucine biosynthesis; L-isoleucine from 2-oxobutanoate: step 3/4.</text>
</comment>
<comment type="pathway">
    <text evidence="1">Amino-acid biosynthesis; L-valine biosynthesis; L-valine from pyruvate: step 3/4.</text>
</comment>
<comment type="subunit">
    <text evidence="1">Homodimer.</text>
</comment>
<comment type="similarity">
    <text evidence="1">Belongs to the IlvD/Edd family.</text>
</comment>
<proteinExistence type="inferred from homology"/>
<organism>
    <name type="scientific">Haemophilus influenzae (strain 86-028NP)</name>
    <dbReference type="NCBI Taxonomy" id="281310"/>
    <lineage>
        <taxon>Bacteria</taxon>
        <taxon>Pseudomonadati</taxon>
        <taxon>Pseudomonadota</taxon>
        <taxon>Gammaproteobacteria</taxon>
        <taxon>Pasteurellales</taxon>
        <taxon>Pasteurellaceae</taxon>
        <taxon>Haemophilus</taxon>
    </lineage>
</organism>
<sequence length="612" mass="65752">MPKLRSATSTQGRNMAGARALWRATGMKENDFGKPIIAVVNSFTQFVPGHVHLKDMGQLVAAEIEKAGGVAKEFNTIAVDDGIAMGHGGMLYSLPSRDLIADSVEYMVNAHCADAMVCISNCDKITPGMLMAAMRLNIPTIFVSGGPMEAGKTKLSDQLIRLDLVDAMIEAADPNVSDERIDAIERSACPTCGSCSGMFTANSMNCLTEALGLSLPGNGSMLATHADRKELFLKAGRQIVELCKRYYEQDDASVLPRSIGTFDAFENAMSLDIAMGGSSNTVLHLLAAAQEAGVDFKMEDIDRLSRKVPCLSKIAPNTNKYHMEDVHRAGGIMGLLGELDRAGLIHKNTHTVLGMSMGEQLDQYDIIRNQDEELHKFFRAGPAGIRTTQAFSQDCRWDTVDNDRVNGCIRNKENAISQEGGLAVLFGNLAEDGCIVKTAGVDESIWKFTGTAIVFESQEDAVAGILGGKVKEGHVVVIRYEGPKGGPGMQEMLYPTSYLKSMGLGKKCALLTDGRFSGGTSGLSIGHASPEAASGGAIGLVRDGDIINIDIPNRAINLEISNDELAARRAEQDQKGWQPANREREVSFALKVFGHFATSADKGAVRDKTLLK</sequence>
<accession>Q4QMF8</accession>
<evidence type="ECO:0000255" key="1">
    <source>
        <dbReference type="HAMAP-Rule" id="MF_00012"/>
    </source>
</evidence>
<dbReference type="EC" id="4.2.1.9" evidence="1"/>
<dbReference type="EMBL" id="CP000057">
    <property type="protein sequence ID" value="AAX87789.1"/>
    <property type="molecule type" value="Genomic_DNA"/>
</dbReference>
<dbReference type="RefSeq" id="WP_005692664.1">
    <property type="nucleotide sequence ID" value="NC_007146.2"/>
</dbReference>
<dbReference type="SMR" id="Q4QMF8"/>
<dbReference type="KEGG" id="hit:NTHI0895"/>
<dbReference type="HOGENOM" id="CLU_014271_4_2_6"/>
<dbReference type="UniPathway" id="UPA00047">
    <property type="reaction ID" value="UER00057"/>
</dbReference>
<dbReference type="UniPathway" id="UPA00049">
    <property type="reaction ID" value="UER00061"/>
</dbReference>
<dbReference type="Proteomes" id="UP000002525">
    <property type="component" value="Chromosome"/>
</dbReference>
<dbReference type="GO" id="GO:0005829">
    <property type="term" value="C:cytosol"/>
    <property type="evidence" value="ECO:0007669"/>
    <property type="project" value="TreeGrafter"/>
</dbReference>
<dbReference type="GO" id="GO:0051537">
    <property type="term" value="F:2 iron, 2 sulfur cluster binding"/>
    <property type="evidence" value="ECO:0007669"/>
    <property type="project" value="UniProtKB-UniRule"/>
</dbReference>
<dbReference type="GO" id="GO:0004160">
    <property type="term" value="F:dihydroxy-acid dehydratase activity"/>
    <property type="evidence" value="ECO:0007669"/>
    <property type="project" value="UniProtKB-UniRule"/>
</dbReference>
<dbReference type="GO" id="GO:0000287">
    <property type="term" value="F:magnesium ion binding"/>
    <property type="evidence" value="ECO:0007669"/>
    <property type="project" value="UniProtKB-UniRule"/>
</dbReference>
<dbReference type="GO" id="GO:0009097">
    <property type="term" value="P:isoleucine biosynthetic process"/>
    <property type="evidence" value="ECO:0007669"/>
    <property type="project" value="UniProtKB-UniRule"/>
</dbReference>
<dbReference type="GO" id="GO:0009099">
    <property type="term" value="P:L-valine biosynthetic process"/>
    <property type="evidence" value="ECO:0007669"/>
    <property type="project" value="UniProtKB-UniRule"/>
</dbReference>
<dbReference type="FunFam" id="3.50.30.80:FF:000001">
    <property type="entry name" value="Dihydroxy-acid dehydratase"/>
    <property type="match status" value="1"/>
</dbReference>
<dbReference type="Gene3D" id="3.50.30.80">
    <property type="entry name" value="IlvD/EDD C-terminal domain-like"/>
    <property type="match status" value="1"/>
</dbReference>
<dbReference type="HAMAP" id="MF_00012">
    <property type="entry name" value="IlvD"/>
    <property type="match status" value="1"/>
</dbReference>
<dbReference type="InterPro" id="IPR042096">
    <property type="entry name" value="Dihydro-acid_dehy_C"/>
</dbReference>
<dbReference type="InterPro" id="IPR004404">
    <property type="entry name" value="DihydroxyA_deHydtase"/>
</dbReference>
<dbReference type="InterPro" id="IPR020558">
    <property type="entry name" value="DiOHA_6PGluconate_deHydtase_CS"/>
</dbReference>
<dbReference type="InterPro" id="IPR056740">
    <property type="entry name" value="ILV_EDD_C"/>
</dbReference>
<dbReference type="InterPro" id="IPR000581">
    <property type="entry name" value="ILV_EDD_N"/>
</dbReference>
<dbReference type="InterPro" id="IPR037237">
    <property type="entry name" value="IlvD/EDD_N"/>
</dbReference>
<dbReference type="NCBIfam" id="TIGR00110">
    <property type="entry name" value="ilvD"/>
    <property type="match status" value="1"/>
</dbReference>
<dbReference type="NCBIfam" id="NF009103">
    <property type="entry name" value="PRK12448.1"/>
    <property type="match status" value="1"/>
</dbReference>
<dbReference type="PANTHER" id="PTHR43661">
    <property type="entry name" value="D-XYLONATE DEHYDRATASE"/>
    <property type="match status" value="1"/>
</dbReference>
<dbReference type="PANTHER" id="PTHR43661:SF3">
    <property type="entry name" value="D-XYLONATE DEHYDRATASE YAGF-RELATED"/>
    <property type="match status" value="1"/>
</dbReference>
<dbReference type="Pfam" id="PF24877">
    <property type="entry name" value="ILV_EDD_C"/>
    <property type="match status" value="1"/>
</dbReference>
<dbReference type="Pfam" id="PF00920">
    <property type="entry name" value="ILVD_EDD_N"/>
    <property type="match status" value="1"/>
</dbReference>
<dbReference type="SUPFAM" id="SSF143975">
    <property type="entry name" value="IlvD/EDD N-terminal domain-like"/>
    <property type="match status" value="1"/>
</dbReference>
<dbReference type="SUPFAM" id="SSF52016">
    <property type="entry name" value="LeuD/IlvD-like"/>
    <property type="match status" value="1"/>
</dbReference>
<dbReference type="PROSITE" id="PS00886">
    <property type="entry name" value="ILVD_EDD_1"/>
    <property type="match status" value="1"/>
</dbReference>
<dbReference type="PROSITE" id="PS00887">
    <property type="entry name" value="ILVD_EDD_2"/>
    <property type="match status" value="1"/>
</dbReference>
<keyword id="KW-0001">2Fe-2S</keyword>
<keyword id="KW-0028">Amino-acid biosynthesis</keyword>
<keyword id="KW-0100">Branched-chain amino acid biosynthesis</keyword>
<keyword id="KW-0408">Iron</keyword>
<keyword id="KW-0411">Iron-sulfur</keyword>
<keyword id="KW-0456">Lyase</keyword>
<keyword id="KW-0460">Magnesium</keyword>
<keyword id="KW-0479">Metal-binding</keyword>
<protein>
    <recommendedName>
        <fullName evidence="1">Dihydroxy-acid dehydratase</fullName>
        <shortName evidence="1">DAD</shortName>
        <ecNumber evidence="1">4.2.1.9</ecNumber>
    </recommendedName>
</protein>
<reference key="1">
    <citation type="journal article" date="2005" name="J. Bacteriol.">
        <title>Genomic sequence of an otitis media isolate of nontypeable Haemophilus influenzae: comparative study with H. influenzae serotype d, strain KW20.</title>
        <authorList>
            <person name="Harrison A."/>
            <person name="Dyer D.W."/>
            <person name="Gillaspy A."/>
            <person name="Ray W.C."/>
            <person name="Mungur R."/>
            <person name="Carson M.B."/>
            <person name="Zhong H."/>
            <person name="Gipson J."/>
            <person name="Gipson M."/>
            <person name="Johnson L.S."/>
            <person name="Lewis L."/>
            <person name="Bakaletz L.O."/>
            <person name="Munson R.S. Jr."/>
        </authorList>
    </citation>
    <scope>NUCLEOTIDE SEQUENCE [LARGE SCALE GENOMIC DNA]</scope>
    <source>
        <strain>86-028NP</strain>
    </source>
</reference>
<name>ILVD_HAEI8</name>
<feature type="chain" id="PRO_0000103470" description="Dihydroxy-acid dehydratase">
    <location>
        <begin position="1"/>
        <end position="612"/>
    </location>
</feature>
<feature type="active site" description="Proton acceptor" evidence="1">
    <location>
        <position position="517"/>
    </location>
</feature>
<feature type="binding site" evidence="1">
    <location>
        <position position="81"/>
    </location>
    <ligand>
        <name>Mg(2+)</name>
        <dbReference type="ChEBI" id="CHEBI:18420"/>
    </ligand>
</feature>
<feature type="binding site" evidence="1">
    <location>
        <position position="122"/>
    </location>
    <ligand>
        <name>[2Fe-2S] cluster</name>
        <dbReference type="ChEBI" id="CHEBI:190135"/>
    </ligand>
</feature>
<feature type="binding site" evidence="1">
    <location>
        <position position="123"/>
    </location>
    <ligand>
        <name>Mg(2+)</name>
        <dbReference type="ChEBI" id="CHEBI:18420"/>
    </ligand>
</feature>
<feature type="binding site" description="via carbamate group" evidence="1">
    <location>
        <position position="124"/>
    </location>
    <ligand>
        <name>Mg(2+)</name>
        <dbReference type="ChEBI" id="CHEBI:18420"/>
    </ligand>
</feature>
<feature type="binding site" evidence="1">
    <location>
        <position position="195"/>
    </location>
    <ligand>
        <name>[2Fe-2S] cluster</name>
        <dbReference type="ChEBI" id="CHEBI:190135"/>
    </ligand>
</feature>
<feature type="binding site" evidence="1">
    <location>
        <position position="491"/>
    </location>
    <ligand>
        <name>Mg(2+)</name>
        <dbReference type="ChEBI" id="CHEBI:18420"/>
    </ligand>
</feature>
<feature type="modified residue" description="N6-carboxylysine" evidence="1">
    <location>
        <position position="124"/>
    </location>
</feature>
<gene>
    <name evidence="1" type="primary">ilvD</name>
    <name type="ordered locus">NTHI0895</name>
</gene>